<proteinExistence type="evidence at protein level"/>
<gene>
    <name evidence="5" type="primary">ATG44</name>
    <name evidence="4" type="synonym">MCO8</name>
    <name type="ordered locus">YIL156W-B</name>
</gene>
<feature type="chain" id="PRO_0000245400" description="Mitofissin">
    <location>
        <begin position="1"/>
        <end position="73"/>
    </location>
</feature>
<evidence type="ECO:0000250" key="1">
    <source>
        <dbReference type="UniProtKB" id="Q10167"/>
    </source>
</evidence>
<evidence type="ECO:0000269" key="2">
    <source>
    </source>
</evidence>
<evidence type="ECO:0000269" key="3">
    <source>
    </source>
</evidence>
<evidence type="ECO:0000303" key="4">
    <source>
    </source>
</evidence>
<evidence type="ECO:0000303" key="5">
    <source>
    </source>
</evidence>
<evidence type="ECO:0000305" key="6"/>
<name>ATG44_YEAST</name>
<reference key="1">
    <citation type="journal article" date="1997" name="Nature">
        <title>The nucleotide sequence of Saccharomyces cerevisiae chromosome IX.</title>
        <authorList>
            <person name="Churcher C.M."/>
            <person name="Bowman S."/>
            <person name="Badcock K."/>
            <person name="Bankier A.T."/>
            <person name="Brown D."/>
            <person name="Chillingworth T."/>
            <person name="Connor R."/>
            <person name="Devlin K."/>
            <person name="Gentles S."/>
            <person name="Hamlin N."/>
            <person name="Harris D.E."/>
            <person name="Horsnell T."/>
            <person name="Hunt S."/>
            <person name="Jagels K."/>
            <person name="Jones M."/>
            <person name="Lye G."/>
            <person name="Moule S."/>
            <person name="Odell C."/>
            <person name="Pearson D."/>
            <person name="Rajandream M.A."/>
            <person name="Rice P."/>
            <person name="Rowley N."/>
            <person name="Skelton J."/>
            <person name="Smith V."/>
            <person name="Walsh S.V."/>
            <person name="Whitehead S."/>
            <person name="Barrell B.G."/>
        </authorList>
    </citation>
    <scope>NUCLEOTIDE SEQUENCE [LARGE SCALE GENOMIC DNA]</scope>
    <source>
        <strain>ATCC 204508 / S288c</strain>
    </source>
</reference>
<reference key="2">
    <citation type="journal article" date="2014" name="G3 (Bethesda)">
        <title>The reference genome sequence of Saccharomyces cerevisiae: Then and now.</title>
        <authorList>
            <person name="Engel S.R."/>
            <person name="Dietrich F.S."/>
            <person name="Fisk D.G."/>
            <person name="Binkley G."/>
            <person name="Balakrishnan R."/>
            <person name="Costanzo M.C."/>
            <person name="Dwight S.S."/>
            <person name="Hitz B.C."/>
            <person name="Karra K."/>
            <person name="Nash R.S."/>
            <person name="Weng S."/>
            <person name="Wong E.D."/>
            <person name="Lloyd P."/>
            <person name="Skrzypek M.S."/>
            <person name="Miyasato S.R."/>
            <person name="Simison M."/>
            <person name="Cherry J.M."/>
        </authorList>
    </citation>
    <scope>GENOME REANNOTATION</scope>
    <source>
        <strain>ATCC 204508 / S288c</strain>
    </source>
</reference>
<reference key="3">
    <citation type="journal article" date="2003" name="Genome Biol.">
        <title>Reinvestigation of the Saccharomyces cerevisiae genome annotation by comparison to the genome of a related fungus: Ashbya gossypii.</title>
        <authorList>
            <person name="Brachat S."/>
            <person name="Dietrich F.S."/>
            <person name="Voegeli S."/>
            <person name="Zhang Z."/>
            <person name="Stuart L."/>
            <person name="Lerch A."/>
            <person name="Gates K."/>
            <person name="Gaffney T.D."/>
            <person name="Philippsen P."/>
        </authorList>
    </citation>
    <scope>GENOME REANNOTATION</scope>
</reference>
<reference key="4">
    <citation type="journal article" date="2003" name="Science">
        <title>Finding functional features in Saccharomyces genomes by phylogenetic footprinting.</title>
        <authorList>
            <person name="Cliften P.F."/>
            <person name="Sudarsanam P."/>
            <person name="Desikan A."/>
            <person name="Fulton L."/>
            <person name="Fulton B."/>
            <person name="Majors J."/>
            <person name="Waterston R."/>
            <person name="Cohen B.A."/>
            <person name="Johnston M."/>
        </authorList>
    </citation>
    <scope>GENOME REANNOTATION</scope>
</reference>
<reference key="5">
    <citation type="journal article" date="2016" name="Nat. Methods">
        <title>One library to make them all: streamlining the creation of yeast libraries via a SWAp-Tag strategy.</title>
        <authorList>
            <person name="Yofe I."/>
            <person name="Weill U."/>
            <person name="Meurer M."/>
            <person name="Chuartzman S."/>
            <person name="Zalckvar E."/>
            <person name="Goldman O."/>
            <person name="Ben-Dor S."/>
            <person name="Schuetze C."/>
            <person name="Wiedemann N."/>
            <person name="Knop M."/>
            <person name="Khmelinskii A."/>
            <person name="Schuldiner M."/>
        </authorList>
    </citation>
    <scope>SUBCELLULAR LOCATION</scope>
</reference>
<reference key="6">
    <citation type="journal article" date="2017" name="Cell Rep.">
        <title>Definition of a High-Confidence Mitochondrial Proteome at Quantitative Scale.</title>
        <authorList>
            <person name="Morgenstern M."/>
            <person name="Stiller S.B."/>
            <person name="Luebbert P."/>
            <person name="Peikert C.D."/>
            <person name="Dannenmaier S."/>
            <person name="Drepper F."/>
            <person name="Weill U."/>
            <person name="Hoess P."/>
            <person name="Feuerstein R."/>
            <person name="Gebert M."/>
            <person name="Bohnert M."/>
            <person name="van der Laan M."/>
            <person name="Schuldiner M."/>
            <person name="Schuetze C."/>
            <person name="Oeljeklaus S."/>
            <person name="Pfanner N."/>
            <person name="Wiedemann N."/>
            <person name="Warscheid B."/>
        </authorList>
    </citation>
    <scope>SUBCELLULAR LOCATION</scope>
</reference>
<reference key="7">
    <citation type="journal article" date="2018" name="J. Proteome Res.">
        <title>Enrichment-based proteogenomics identifies microproteins, missing proteins, and novel smORFs in Saccharomyces cerevisiae.</title>
        <authorList>
            <person name="He C."/>
            <person name="Jia C."/>
            <person name="Zhang Y."/>
            <person name="Xu P."/>
        </authorList>
    </citation>
    <scope>IDENTIFICATION BY MASS SPECTROMETRY</scope>
</reference>
<reference key="8">
    <citation type="journal article" date="2023" name="Mol. Cell">
        <title>The mitochondrial intermembrane space protein mitofissin drives mitochondrial fission required for mitophagy.</title>
        <authorList>
            <person name="Fukuda T."/>
            <person name="Furukawa K."/>
            <person name="Maruyama T."/>
            <person name="Yamashita S.I."/>
            <person name="Noshiro D."/>
            <person name="Song C."/>
            <person name="Ogasawara Y."/>
            <person name="Okuyama K."/>
            <person name="Alam J.M."/>
            <person name="Hayatsu M."/>
            <person name="Saigusa T."/>
            <person name="Inoue K."/>
            <person name="Ikeda K."/>
            <person name="Takai A."/>
            <person name="Chen L."/>
            <person name="Lahiri V."/>
            <person name="Okada Y."/>
            <person name="Shibata S."/>
            <person name="Murata K."/>
            <person name="Klionsky D.J."/>
            <person name="Noda N.N."/>
            <person name="Kanki T."/>
        </authorList>
    </citation>
    <scope>FUNCTION</scope>
    <scope>DISRUPTION PHENOTYPE</scope>
    <scope>SUBCELLULAR LOCATION</scope>
</reference>
<sequence length="73" mass="8165">MTLVGKLVHISIDLVLVSTCLAGIKRNTGLTPKLETLDNQTMRNYMKRYLNLGESVYDYSVATCGSSTYFARK</sequence>
<protein>
    <recommendedName>
        <fullName evidence="5">Mitofissin</fullName>
    </recommendedName>
    <alternativeName>
        <fullName evidence="5">Autophagy-related protein 44</fullName>
    </alternativeName>
    <alternativeName>
        <fullName evidence="5">Mitochondrial fission factor ATG44</fullName>
    </alternativeName>
</protein>
<accession>Q2V2P4</accession>
<accession>D6VVD0</accession>
<dbReference type="EMBL" id="Z38059">
    <property type="status" value="NOT_ANNOTATED_CDS"/>
    <property type="molecule type" value="Genomic_DNA"/>
</dbReference>
<dbReference type="EMBL" id="BK006942">
    <property type="protein sequence ID" value="DAA08396.1"/>
    <property type="molecule type" value="Genomic_DNA"/>
</dbReference>
<dbReference type="RefSeq" id="NP_001027534.1">
    <property type="nucleotide sequence ID" value="NM_001184521.1"/>
</dbReference>
<dbReference type="SMR" id="Q2V2P4"/>
<dbReference type="BioGRID" id="531937">
    <property type="interactions" value="12"/>
</dbReference>
<dbReference type="FunCoup" id="Q2V2P4">
    <property type="interactions" value="1"/>
</dbReference>
<dbReference type="IntAct" id="Q2V2P4">
    <property type="interactions" value="5"/>
</dbReference>
<dbReference type="STRING" id="4932.YIL156W-B"/>
<dbReference type="PaxDb" id="4932-YIL156W-B"/>
<dbReference type="PeptideAtlas" id="Q2V2P4"/>
<dbReference type="EnsemblFungi" id="YIL156W-B_mRNA">
    <property type="protein sequence ID" value="YIL156W-B"/>
    <property type="gene ID" value="YIL156W-B"/>
</dbReference>
<dbReference type="GeneID" id="3628034"/>
<dbReference type="KEGG" id="sce:YIL156W-B"/>
<dbReference type="AGR" id="SGD:S000028511"/>
<dbReference type="SGD" id="S000028511">
    <property type="gene designation" value="ATG44"/>
</dbReference>
<dbReference type="VEuPathDB" id="FungiDB:YIL156W-B"/>
<dbReference type="eggNOG" id="ENOG502S6Z8">
    <property type="taxonomic scope" value="Eukaryota"/>
</dbReference>
<dbReference type="HOGENOM" id="CLU_151392_1_1_1"/>
<dbReference type="InParanoid" id="Q2V2P4"/>
<dbReference type="OMA" id="NKEVGKW"/>
<dbReference type="OrthoDB" id="16824at2759"/>
<dbReference type="BioCyc" id="YEAST:G3O-31470-MONOMER"/>
<dbReference type="BioGRID-ORCS" id="3628034">
    <property type="hits" value="9 hits in 10 CRISPR screens"/>
</dbReference>
<dbReference type="PRO" id="PR:Q2V2P4"/>
<dbReference type="Proteomes" id="UP000002311">
    <property type="component" value="Chromosome IX"/>
</dbReference>
<dbReference type="RNAct" id="Q2V2P4">
    <property type="molecule type" value="protein"/>
</dbReference>
<dbReference type="GO" id="GO:0005737">
    <property type="term" value="C:cytoplasm"/>
    <property type="evidence" value="ECO:0000318"/>
    <property type="project" value="GO_Central"/>
</dbReference>
<dbReference type="GO" id="GO:0005758">
    <property type="term" value="C:mitochondrial intermembrane space"/>
    <property type="evidence" value="ECO:0000314"/>
    <property type="project" value="SGD"/>
</dbReference>
<dbReference type="GO" id="GO:0005773">
    <property type="term" value="C:vacuole"/>
    <property type="evidence" value="ECO:0007669"/>
    <property type="project" value="UniProtKB-SubCell"/>
</dbReference>
<dbReference type="GO" id="GO:0008289">
    <property type="term" value="F:lipid binding"/>
    <property type="evidence" value="ECO:0000314"/>
    <property type="project" value="SGD"/>
</dbReference>
<dbReference type="GO" id="GO:0000266">
    <property type="term" value="P:mitochondrial fission"/>
    <property type="evidence" value="ECO:0000315"/>
    <property type="project" value="SGD"/>
</dbReference>
<dbReference type="GO" id="GO:0000423">
    <property type="term" value="P:mitophagy"/>
    <property type="evidence" value="ECO:0000315"/>
    <property type="project" value="SGD"/>
</dbReference>
<dbReference type="InterPro" id="IPR013726">
    <property type="entry name" value="Mitofissin"/>
</dbReference>
<dbReference type="PANTHER" id="PTHR28075">
    <property type="entry name" value="CHROMOSOME 16, WHOLE GENOME SHOTGUN SEQUENCE"/>
    <property type="match status" value="1"/>
</dbReference>
<dbReference type="PANTHER" id="PTHR28075:SF1">
    <property type="entry name" value="DUF1748-DOMAIN-CONTAINING PROTEIN"/>
    <property type="match status" value="1"/>
</dbReference>
<dbReference type="Pfam" id="PF08520">
    <property type="entry name" value="Mitofissin"/>
    <property type="match status" value="1"/>
</dbReference>
<organism>
    <name type="scientific">Saccharomyces cerevisiae (strain ATCC 204508 / S288c)</name>
    <name type="common">Baker's yeast</name>
    <dbReference type="NCBI Taxonomy" id="559292"/>
    <lineage>
        <taxon>Eukaryota</taxon>
        <taxon>Fungi</taxon>
        <taxon>Dikarya</taxon>
        <taxon>Ascomycota</taxon>
        <taxon>Saccharomycotina</taxon>
        <taxon>Saccharomycetes</taxon>
        <taxon>Saccharomycetales</taxon>
        <taxon>Saccharomycetaceae</taxon>
        <taxon>Saccharomyces</taxon>
    </lineage>
</organism>
<comment type="function">
    <text evidence="3">Mitochondrial fission factor that acts directly on lipid membranes to drive mitochondrial fission required for mitophagy (PubMed:37192628). Directly binds to lipid membranes and brings about lipid membrane fragility to facilitate membrane fission and engulfment of mitochondria by the phagophore (PubMed:37192628).</text>
</comment>
<comment type="subunit">
    <text evidence="1">Homooligomer (By similarity). Found as homooctamer in solution, but binds to membranes either as a monomer, dimer, or tetramer, not as an octamer (By similarity).</text>
</comment>
<comment type="subcellular location">
    <subcellularLocation>
        <location evidence="3">Mitochondrion intermembrane space</location>
    </subcellularLocation>
    <subcellularLocation>
        <location evidence="2">Vacuole</location>
    </subcellularLocation>
</comment>
<comment type="disruption phenotype">
    <text evidence="3">Lacks mitochondrial fission anf impairs engulfment of mitochondria by the phagophore even if it does not affect the recognition by the mitophagy machinery as cargo (PubMed:37192628). Does not affect reticulophagy, pexophagy, nor the Cvt pathway that delivers the precursor form of the hydrolase aminopeptidase I to the vacuole (PubMed:37192628).</text>
</comment>
<comment type="similarity">
    <text evidence="6">Belongs to the ?ATG44? family.</text>
</comment>
<keyword id="KW-0072">Autophagy</keyword>
<keyword id="KW-0496">Mitochondrion</keyword>
<keyword id="KW-1185">Reference proteome</keyword>
<keyword id="KW-0926">Vacuole</keyword>